<accession>Q2TW03</accession>
<reference key="1">
    <citation type="journal article" date="2005" name="Nature">
        <title>Genome sequencing and analysis of Aspergillus oryzae.</title>
        <authorList>
            <person name="Machida M."/>
            <person name="Asai K."/>
            <person name="Sano M."/>
            <person name="Tanaka T."/>
            <person name="Kumagai T."/>
            <person name="Terai G."/>
            <person name="Kusumoto K."/>
            <person name="Arima T."/>
            <person name="Akita O."/>
            <person name="Kashiwagi Y."/>
            <person name="Abe K."/>
            <person name="Gomi K."/>
            <person name="Horiuchi H."/>
            <person name="Kitamoto K."/>
            <person name="Kobayashi T."/>
            <person name="Takeuchi M."/>
            <person name="Denning D.W."/>
            <person name="Galagan J.E."/>
            <person name="Nierman W.C."/>
            <person name="Yu J."/>
            <person name="Archer D.B."/>
            <person name="Bennett J.W."/>
            <person name="Bhatnagar D."/>
            <person name="Cleveland T.E."/>
            <person name="Fedorova N.D."/>
            <person name="Gotoh O."/>
            <person name="Horikawa H."/>
            <person name="Hosoyama A."/>
            <person name="Ichinomiya M."/>
            <person name="Igarashi R."/>
            <person name="Iwashita K."/>
            <person name="Juvvadi P.R."/>
            <person name="Kato M."/>
            <person name="Kato Y."/>
            <person name="Kin T."/>
            <person name="Kokubun A."/>
            <person name="Maeda H."/>
            <person name="Maeyama N."/>
            <person name="Maruyama J."/>
            <person name="Nagasaki H."/>
            <person name="Nakajima T."/>
            <person name="Oda K."/>
            <person name="Okada K."/>
            <person name="Paulsen I."/>
            <person name="Sakamoto K."/>
            <person name="Sawano T."/>
            <person name="Takahashi M."/>
            <person name="Takase K."/>
            <person name="Terabayashi Y."/>
            <person name="Wortman J.R."/>
            <person name="Yamada O."/>
            <person name="Yamagata Y."/>
            <person name="Anazawa H."/>
            <person name="Hata Y."/>
            <person name="Koide Y."/>
            <person name="Komori T."/>
            <person name="Koyama Y."/>
            <person name="Minetoki T."/>
            <person name="Suharnan S."/>
            <person name="Tanaka A."/>
            <person name="Isono K."/>
            <person name="Kuhara S."/>
            <person name="Ogasawara N."/>
            <person name="Kikuchi H."/>
        </authorList>
    </citation>
    <scope>NUCLEOTIDE SEQUENCE [LARGE SCALE GENOMIC DNA]</scope>
    <source>
        <strain>ATCC 42149 / RIB 40</strain>
    </source>
</reference>
<comment type="function">
    <text evidence="1">Specific in hydrolyzing the terminal glycosidic bond of polygalacturonic acid and oligogalacturonates.</text>
</comment>
<comment type="catalytic activity">
    <reaction>
        <text>[(1-&gt;4)-alpha-D-galacturonosyl](n) + H2O = alpha-D-galacturonate + [(1-&gt;4)-alpha-D-galacturonosyl](n-1)</text>
        <dbReference type="Rhea" id="RHEA:14117"/>
        <dbReference type="Rhea" id="RHEA-COMP:14570"/>
        <dbReference type="Rhea" id="RHEA-COMP:14572"/>
        <dbReference type="ChEBI" id="CHEBI:15377"/>
        <dbReference type="ChEBI" id="CHEBI:58658"/>
        <dbReference type="ChEBI" id="CHEBI:140523"/>
        <dbReference type="EC" id="3.2.1.67"/>
    </reaction>
</comment>
<comment type="subcellular location">
    <subcellularLocation>
        <location evidence="1">Secreted</location>
    </subcellularLocation>
</comment>
<comment type="similarity">
    <text evidence="3">Belongs to the glycosyl hydrolase 28 family.</text>
</comment>
<comment type="sequence caution" evidence="3">
    <conflict type="erroneous gene model prediction">
        <sequence resource="EMBL-CDS" id="BAE66570"/>
    </conflict>
</comment>
<name>PGXB_ASPOR</name>
<sequence length="435" mass="48386">MKFFLATLFASAVSSIAVDRLIPGAQIIPESDTRALLRVGGHHDKYHDRRTITIRPSRNDTDDVSRDFLWGIKHANHGGRLLLKKGEKYVIGRKLDLTFLDDIEVQLDGELKFTDDVSYWQENNFYYDFQKSITFWRWGGKDIKIFGTGLLNGNGQRWYNEFAGQEILDPDNEYYRPILFLTENATRISVEGITQLNSPCWTNFFIQSKDVSFDDVYIHAFSTNKSALPKNSDGFDSLNVDGLTVTNTRVDVGDDCFSPKPNTTNIFVQNLLCNNTHGVSMGSIGQYPGVMDIIEHAYIENVTLLNGQNGARLKAWAGQDVGYGRINNITYKNIRIENTDAPVVLDQCYFDIEAAECAQYPSQVNVTNILFENISGTSSGKNGKVVADLVCSPNAVCSDIQLKNINLTSPAGSPPEIICEGVQGDIGVECQASAD</sequence>
<proteinExistence type="inferred from homology"/>
<evidence type="ECO:0000250" key="1"/>
<evidence type="ECO:0000255" key="2"/>
<evidence type="ECO:0000305" key="3"/>
<dbReference type="EC" id="3.2.1.67"/>
<dbReference type="EMBL" id="BA000056">
    <property type="protein sequence ID" value="BAE66570.1"/>
    <property type="status" value="ALT_SEQ"/>
    <property type="molecule type" value="Genomic_DNA"/>
</dbReference>
<dbReference type="RefSeq" id="XP_001827703.2">
    <property type="nucleotide sequence ID" value="XM_001827651.2"/>
</dbReference>
<dbReference type="SMR" id="Q2TW03"/>
<dbReference type="STRING" id="510516.Q2TW03"/>
<dbReference type="CAZy" id="GH28">
    <property type="family name" value="Glycoside Hydrolase Family 28"/>
</dbReference>
<dbReference type="GlyCosmos" id="Q2TW03">
    <property type="glycosylation" value="10 sites, No reported glycans"/>
</dbReference>
<dbReference type="VEuPathDB" id="FungiDB:AO090010000753"/>
<dbReference type="Proteomes" id="UP000006564">
    <property type="component" value="Chromosome 8"/>
</dbReference>
<dbReference type="GO" id="GO:0005576">
    <property type="term" value="C:extracellular region"/>
    <property type="evidence" value="ECO:0000250"/>
    <property type="project" value="UniProtKB"/>
</dbReference>
<dbReference type="GO" id="GO:0047911">
    <property type="term" value="F:galacturan 1,4-alpha-galacturonidase activity"/>
    <property type="evidence" value="ECO:0007669"/>
    <property type="project" value="UniProtKB-EC"/>
</dbReference>
<dbReference type="GO" id="GO:0004650">
    <property type="term" value="F:polygalacturonase activity"/>
    <property type="evidence" value="ECO:0000250"/>
    <property type="project" value="UniProtKB"/>
</dbReference>
<dbReference type="GO" id="GO:0071555">
    <property type="term" value="P:cell wall organization"/>
    <property type="evidence" value="ECO:0007669"/>
    <property type="project" value="UniProtKB-KW"/>
</dbReference>
<dbReference type="GO" id="GO:0045490">
    <property type="term" value="P:pectin catabolic process"/>
    <property type="evidence" value="ECO:0000250"/>
    <property type="project" value="UniProtKB"/>
</dbReference>
<dbReference type="FunFam" id="2.160.20.10:FF:000040">
    <property type="entry name" value="Probable exopolygalacturonase B"/>
    <property type="match status" value="1"/>
</dbReference>
<dbReference type="Gene3D" id="2.160.20.10">
    <property type="entry name" value="Single-stranded right-handed beta-helix, Pectin lyase-like"/>
    <property type="match status" value="1"/>
</dbReference>
<dbReference type="InterPro" id="IPR000743">
    <property type="entry name" value="Glyco_hydro_28"/>
</dbReference>
<dbReference type="InterPro" id="IPR012334">
    <property type="entry name" value="Pectin_lyas_fold"/>
</dbReference>
<dbReference type="InterPro" id="IPR011050">
    <property type="entry name" value="Pectin_lyase_fold/virulence"/>
</dbReference>
<dbReference type="PANTHER" id="PTHR31736">
    <property type="match status" value="1"/>
</dbReference>
<dbReference type="PANTHER" id="PTHR31736:SF6">
    <property type="entry name" value="EXOPOLYGALACTURONASE B-RELATED"/>
    <property type="match status" value="1"/>
</dbReference>
<dbReference type="Pfam" id="PF00295">
    <property type="entry name" value="Glyco_hydro_28"/>
    <property type="match status" value="1"/>
</dbReference>
<dbReference type="SUPFAM" id="SSF51126">
    <property type="entry name" value="Pectin lyase-like"/>
    <property type="match status" value="1"/>
</dbReference>
<keyword id="KW-0961">Cell wall biogenesis/degradation</keyword>
<keyword id="KW-1015">Disulfide bond</keyword>
<keyword id="KW-0325">Glycoprotein</keyword>
<keyword id="KW-0326">Glycosidase</keyword>
<keyword id="KW-0378">Hydrolase</keyword>
<keyword id="KW-1185">Reference proteome</keyword>
<keyword id="KW-0677">Repeat</keyword>
<keyword id="KW-0964">Secreted</keyword>
<keyword id="KW-0732">Signal</keyword>
<organism>
    <name type="scientific">Aspergillus oryzae (strain ATCC 42149 / RIB 40)</name>
    <name type="common">Yellow koji mold</name>
    <dbReference type="NCBI Taxonomy" id="510516"/>
    <lineage>
        <taxon>Eukaryota</taxon>
        <taxon>Fungi</taxon>
        <taxon>Dikarya</taxon>
        <taxon>Ascomycota</taxon>
        <taxon>Pezizomycotina</taxon>
        <taxon>Eurotiomycetes</taxon>
        <taxon>Eurotiomycetidae</taxon>
        <taxon>Eurotiales</taxon>
        <taxon>Aspergillaceae</taxon>
        <taxon>Aspergillus</taxon>
        <taxon>Aspergillus subgen. Circumdati</taxon>
    </lineage>
</organism>
<protein>
    <recommendedName>
        <fullName>Probable exopolygalacturonase B</fullName>
        <ecNumber>3.2.1.67</ecNumber>
    </recommendedName>
    <alternativeName>
        <fullName>Galacturan 1,4-alpha-galacturonidase B</fullName>
    </alternativeName>
    <alternativeName>
        <fullName>Poly(1,4-alpha-D-galacturonide)galacturonohydrolase B</fullName>
    </alternativeName>
</protein>
<feature type="signal peptide" evidence="2">
    <location>
        <begin position="1"/>
        <end position="15"/>
    </location>
</feature>
<feature type="chain" id="PRO_0000393679" description="Probable exopolygalacturonase B">
    <location>
        <begin position="16"/>
        <end position="435"/>
    </location>
</feature>
<feature type="repeat" description="PbH1 1">
    <location>
        <begin position="208"/>
        <end position="239"/>
    </location>
</feature>
<feature type="repeat" description="PbH1 2">
    <location>
        <begin position="240"/>
        <end position="261"/>
    </location>
</feature>
<feature type="repeat" description="PbH1 3">
    <location>
        <begin position="262"/>
        <end position="283"/>
    </location>
</feature>
<feature type="repeat" description="PbH1 4">
    <location>
        <begin position="294"/>
        <end position="315"/>
    </location>
</feature>
<feature type="repeat" description="PbH1 5">
    <location>
        <begin position="326"/>
        <end position="347"/>
    </location>
</feature>
<feature type="repeat" description="PbH1 6">
    <location>
        <begin position="366"/>
        <end position="388"/>
    </location>
</feature>
<feature type="active site" description="Proton donor" evidence="1">
    <location>
        <position position="254"/>
    </location>
</feature>
<feature type="active site" evidence="1">
    <location>
        <position position="277"/>
    </location>
</feature>
<feature type="glycosylation site" description="N-linked (GlcNAc...) asparagine" evidence="2">
    <location>
        <position position="59"/>
    </location>
</feature>
<feature type="glycosylation site" description="N-linked (GlcNAc...) asparagine" evidence="2">
    <location>
        <position position="184"/>
    </location>
</feature>
<feature type="glycosylation site" description="N-linked (GlcNAc...) asparagine" evidence="2">
    <location>
        <position position="224"/>
    </location>
</feature>
<feature type="glycosylation site" description="N-linked (GlcNAc...) asparagine" evidence="2">
    <location>
        <position position="262"/>
    </location>
</feature>
<feature type="glycosylation site" description="N-linked (GlcNAc...) asparagine" evidence="2">
    <location>
        <position position="274"/>
    </location>
</feature>
<feature type="glycosylation site" description="N-linked (GlcNAc...) asparagine" evidence="2">
    <location>
        <position position="301"/>
    </location>
</feature>
<feature type="glycosylation site" description="N-linked (GlcNAc...) asparagine" evidence="2">
    <location>
        <position position="328"/>
    </location>
</feature>
<feature type="glycosylation site" description="N-linked (GlcNAc...) asparagine" evidence="2">
    <location>
        <position position="365"/>
    </location>
</feature>
<feature type="glycosylation site" description="N-linked (GlcNAc...) asparagine" evidence="2">
    <location>
        <position position="373"/>
    </location>
</feature>
<feature type="glycosylation site" description="N-linked (GlcNAc...) asparagine" evidence="2">
    <location>
        <position position="406"/>
    </location>
</feature>
<feature type="disulfide bond" evidence="1">
    <location>
        <begin position="256"/>
        <end position="273"/>
    </location>
</feature>
<feature type="disulfide bond" evidence="1">
    <location>
        <begin position="391"/>
        <end position="397"/>
    </location>
</feature>
<gene>
    <name type="primary">pgxB</name>
    <name type="ORF">AO090010000753</name>
</gene>